<protein>
    <recommendedName>
        <fullName evidence="1">Pyridoxal phosphate homeostasis protein</fullName>
        <shortName evidence="1">PLP homeostasis protein</shortName>
    </recommendedName>
</protein>
<accession>P67082</accession>
<accession>A0A6M0JHQ9</accession>
<accession>P52054</accession>
<accession>Q7AAX0</accession>
<accession>Q8XCU9</accession>
<proteinExistence type="inferred from homology"/>
<feature type="chain" id="PRO_0000163198" description="Pyridoxal phosphate homeostasis protein">
    <location>
        <begin position="1"/>
        <end position="234"/>
    </location>
</feature>
<feature type="modified residue" description="N6-(pyridoxal phosphate)lysine" evidence="1">
    <location>
        <position position="36"/>
    </location>
</feature>
<keyword id="KW-0663">Pyridoxal phosphate</keyword>
<keyword id="KW-1185">Reference proteome</keyword>
<sequence length="234" mass="25787">MNDIAHNLAQVRDKISAAATRCGRSPEEITLLAVSKTKPASAIAEAIDAGQRQFGENYVQEGVDKIRHFQELGVTGLEWHFIGPLQSNKSRLVAEHFDWCHTIDRLRIATRLNDQRPAELPPLNVLIQINISDENSKSGIQLAELDELAAAVAELPRLRLRGLMAIPAPESEYVRQFEVARQMAVAFAGLKTRYPHIDTLSLGMSDDMEAAIAAGSTMVRIGTAIFGARDYSKK</sequence>
<evidence type="ECO:0000255" key="1">
    <source>
        <dbReference type="HAMAP-Rule" id="MF_02087"/>
    </source>
</evidence>
<comment type="function">
    <text evidence="1">Pyridoxal 5'-phosphate (PLP)-binding protein, which is involved in PLP homeostasis.</text>
</comment>
<comment type="subunit">
    <text evidence="1">Monomer.</text>
</comment>
<comment type="similarity">
    <text evidence="1">Belongs to the pyridoxal phosphate-binding protein YggS/PROSC family.</text>
</comment>
<dbReference type="EMBL" id="AE005174">
    <property type="protein sequence ID" value="AAG58082.1"/>
    <property type="molecule type" value="Genomic_DNA"/>
</dbReference>
<dbReference type="EMBL" id="BA000007">
    <property type="protein sequence ID" value="BAB37249.2"/>
    <property type="molecule type" value="Genomic_DNA"/>
</dbReference>
<dbReference type="PIR" id="C91107">
    <property type="entry name" value="C91107"/>
</dbReference>
<dbReference type="PIR" id="F85952">
    <property type="entry name" value="F85952"/>
</dbReference>
<dbReference type="RefSeq" id="NP_311853.2">
    <property type="nucleotide sequence ID" value="NC_002695.1"/>
</dbReference>
<dbReference type="RefSeq" id="WP_000997795.1">
    <property type="nucleotide sequence ID" value="NZ_VOAI01000003.1"/>
</dbReference>
<dbReference type="SMR" id="P67082"/>
<dbReference type="STRING" id="155864.Z4296"/>
<dbReference type="GeneID" id="916354"/>
<dbReference type="GeneID" id="93779046"/>
<dbReference type="KEGG" id="ece:Z4296"/>
<dbReference type="KEGG" id="ecs:ECs_3827"/>
<dbReference type="PATRIC" id="fig|386585.9.peg.3993"/>
<dbReference type="eggNOG" id="COG0325">
    <property type="taxonomic scope" value="Bacteria"/>
</dbReference>
<dbReference type="eggNOG" id="COG2805">
    <property type="taxonomic scope" value="Bacteria"/>
</dbReference>
<dbReference type="HOGENOM" id="CLU_059988_0_1_6"/>
<dbReference type="OMA" id="PLEWHMI"/>
<dbReference type="Proteomes" id="UP000000558">
    <property type="component" value="Chromosome"/>
</dbReference>
<dbReference type="Proteomes" id="UP000002519">
    <property type="component" value="Chromosome"/>
</dbReference>
<dbReference type="GO" id="GO:0030170">
    <property type="term" value="F:pyridoxal phosphate binding"/>
    <property type="evidence" value="ECO:0007669"/>
    <property type="project" value="UniProtKB-UniRule"/>
</dbReference>
<dbReference type="CDD" id="cd06824">
    <property type="entry name" value="PLPDE_III_Yggs_like"/>
    <property type="match status" value="1"/>
</dbReference>
<dbReference type="FunFam" id="3.20.20.10:FF:000004">
    <property type="entry name" value="Pyridoxal phosphate homeostasis protein"/>
    <property type="match status" value="1"/>
</dbReference>
<dbReference type="Gene3D" id="3.20.20.10">
    <property type="entry name" value="Alanine racemase"/>
    <property type="match status" value="1"/>
</dbReference>
<dbReference type="HAMAP" id="MF_02087">
    <property type="entry name" value="PLP_homeostasis"/>
    <property type="match status" value="1"/>
</dbReference>
<dbReference type="InterPro" id="IPR001608">
    <property type="entry name" value="Ala_racemase_N"/>
</dbReference>
<dbReference type="InterPro" id="IPR029066">
    <property type="entry name" value="PLP-binding_barrel"/>
</dbReference>
<dbReference type="InterPro" id="IPR011078">
    <property type="entry name" value="PyrdxlP_homeostasis"/>
</dbReference>
<dbReference type="NCBIfam" id="TIGR00044">
    <property type="entry name" value="YggS family pyridoxal phosphate-dependent enzyme"/>
    <property type="match status" value="1"/>
</dbReference>
<dbReference type="PANTHER" id="PTHR10146">
    <property type="entry name" value="PROLINE SYNTHETASE CO-TRANSCRIBED BACTERIAL HOMOLOG PROTEIN"/>
    <property type="match status" value="1"/>
</dbReference>
<dbReference type="PANTHER" id="PTHR10146:SF14">
    <property type="entry name" value="PYRIDOXAL PHOSPHATE HOMEOSTASIS PROTEIN"/>
    <property type="match status" value="1"/>
</dbReference>
<dbReference type="Pfam" id="PF01168">
    <property type="entry name" value="Ala_racemase_N"/>
    <property type="match status" value="1"/>
</dbReference>
<dbReference type="PIRSF" id="PIRSF004848">
    <property type="entry name" value="YBL036c_PLPDEIII"/>
    <property type="match status" value="1"/>
</dbReference>
<dbReference type="SUPFAM" id="SSF51419">
    <property type="entry name" value="PLP-binding barrel"/>
    <property type="match status" value="1"/>
</dbReference>
<dbReference type="PROSITE" id="PS01211">
    <property type="entry name" value="UPF0001"/>
    <property type="match status" value="1"/>
</dbReference>
<name>PLPHP_ECO57</name>
<reference key="1">
    <citation type="journal article" date="2001" name="Nature">
        <title>Genome sequence of enterohaemorrhagic Escherichia coli O157:H7.</title>
        <authorList>
            <person name="Perna N.T."/>
            <person name="Plunkett G. III"/>
            <person name="Burland V."/>
            <person name="Mau B."/>
            <person name="Glasner J.D."/>
            <person name="Rose D.J."/>
            <person name="Mayhew G.F."/>
            <person name="Evans P.S."/>
            <person name="Gregor J."/>
            <person name="Kirkpatrick H.A."/>
            <person name="Posfai G."/>
            <person name="Hackett J."/>
            <person name="Klink S."/>
            <person name="Boutin A."/>
            <person name="Shao Y."/>
            <person name="Miller L."/>
            <person name="Grotbeck E.J."/>
            <person name="Davis N.W."/>
            <person name="Lim A."/>
            <person name="Dimalanta E.T."/>
            <person name="Potamousis K."/>
            <person name="Apodaca J."/>
            <person name="Anantharaman T.S."/>
            <person name="Lin J."/>
            <person name="Yen G."/>
            <person name="Schwartz D.C."/>
            <person name="Welch R.A."/>
            <person name="Blattner F.R."/>
        </authorList>
    </citation>
    <scope>NUCLEOTIDE SEQUENCE [LARGE SCALE GENOMIC DNA]</scope>
    <source>
        <strain>O157:H7 / EDL933 / ATCC 700927 / EHEC</strain>
    </source>
</reference>
<reference key="2">
    <citation type="journal article" date="2001" name="DNA Res.">
        <title>Complete genome sequence of enterohemorrhagic Escherichia coli O157:H7 and genomic comparison with a laboratory strain K-12.</title>
        <authorList>
            <person name="Hayashi T."/>
            <person name="Makino K."/>
            <person name="Ohnishi M."/>
            <person name="Kurokawa K."/>
            <person name="Ishii K."/>
            <person name="Yokoyama K."/>
            <person name="Han C.-G."/>
            <person name="Ohtsubo E."/>
            <person name="Nakayama K."/>
            <person name="Murata T."/>
            <person name="Tanaka M."/>
            <person name="Tobe T."/>
            <person name="Iida T."/>
            <person name="Takami H."/>
            <person name="Honda T."/>
            <person name="Sasakawa C."/>
            <person name="Ogasawara N."/>
            <person name="Yasunaga T."/>
            <person name="Kuhara S."/>
            <person name="Shiba T."/>
            <person name="Hattori M."/>
            <person name="Shinagawa H."/>
        </authorList>
    </citation>
    <scope>NUCLEOTIDE SEQUENCE [LARGE SCALE GENOMIC DNA]</scope>
    <source>
        <strain>O157:H7 / Sakai / RIMD 0509952 / EHEC</strain>
    </source>
</reference>
<organism>
    <name type="scientific">Escherichia coli O157:H7</name>
    <dbReference type="NCBI Taxonomy" id="83334"/>
    <lineage>
        <taxon>Bacteria</taxon>
        <taxon>Pseudomonadati</taxon>
        <taxon>Pseudomonadota</taxon>
        <taxon>Gammaproteobacteria</taxon>
        <taxon>Enterobacterales</taxon>
        <taxon>Enterobacteriaceae</taxon>
        <taxon>Escherichia</taxon>
    </lineage>
</organism>
<gene>
    <name type="primary">yggS</name>
    <name type="ordered locus">Z4296</name>
    <name type="ordered locus">ECs3827</name>
</gene>